<accession>B7LRN4</accession>
<keyword id="KW-0963">Cytoplasm</keyword>
<keyword id="KW-0489">Methyltransferase</keyword>
<keyword id="KW-0949">S-adenosyl-L-methionine</keyword>
<keyword id="KW-0808">Transferase</keyword>
<dbReference type="EC" id="2.1.1.-" evidence="1"/>
<dbReference type="EMBL" id="CU928158">
    <property type="protein sequence ID" value="CAQ90730.1"/>
    <property type="molecule type" value="Genomic_DNA"/>
</dbReference>
<dbReference type="RefSeq" id="WP_001145812.1">
    <property type="nucleotide sequence ID" value="NC_011740.1"/>
</dbReference>
<dbReference type="SMR" id="B7LRN4"/>
<dbReference type="GeneID" id="75060147"/>
<dbReference type="KEGG" id="efe:EFER_3238"/>
<dbReference type="HOGENOM" id="CLU_049382_4_1_6"/>
<dbReference type="OrthoDB" id="9785995at2"/>
<dbReference type="Proteomes" id="UP000000745">
    <property type="component" value="Chromosome"/>
</dbReference>
<dbReference type="GO" id="GO:0005829">
    <property type="term" value="C:cytosol"/>
    <property type="evidence" value="ECO:0007669"/>
    <property type="project" value="TreeGrafter"/>
</dbReference>
<dbReference type="GO" id="GO:0016279">
    <property type="term" value="F:protein-lysine N-methyltransferase activity"/>
    <property type="evidence" value="ECO:0007669"/>
    <property type="project" value="TreeGrafter"/>
</dbReference>
<dbReference type="GO" id="GO:0032259">
    <property type="term" value="P:methylation"/>
    <property type="evidence" value="ECO:0007669"/>
    <property type="project" value="UniProtKB-KW"/>
</dbReference>
<dbReference type="CDD" id="cd02440">
    <property type="entry name" value="AdoMet_MTases"/>
    <property type="match status" value="1"/>
</dbReference>
<dbReference type="FunFam" id="3.40.50.150:FF:000021">
    <property type="entry name" value="Ribosomal protein L11 methyltransferase"/>
    <property type="match status" value="1"/>
</dbReference>
<dbReference type="Gene3D" id="3.40.50.150">
    <property type="entry name" value="Vaccinia Virus protein VP39"/>
    <property type="match status" value="1"/>
</dbReference>
<dbReference type="HAMAP" id="MF_00735">
    <property type="entry name" value="Methyltr_PrmA"/>
    <property type="match status" value="1"/>
</dbReference>
<dbReference type="InterPro" id="IPR050078">
    <property type="entry name" value="Ribosomal_L11_MeTrfase_PrmA"/>
</dbReference>
<dbReference type="InterPro" id="IPR004498">
    <property type="entry name" value="Ribosomal_PrmA_MeTrfase"/>
</dbReference>
<dbReference type="InterPro" id="IPR029063">
    <property type="entry name" value="SAM-dependent_MTases_sf"/>
</dbReference>
<dbReference type="NCBIfam" id="TIGR00406">
    <property type="entry name" value="prmA"/>
    <property type="match status" value="1"/>
</dbReference>
<dbReference type="PANTHER" id="PTHR43648">
    <property type="entry name" value="ELECTRON TRANSFER FLAVOPROTEIN BETA SUBUNIT LYSINE METHYLTRANSFERASE"/>
    <property type="match status" value="1"/>
</dbReference>
<dbReference type="PANTHER" id="PTHR43648:SF1">
    <property type="entry name" value="ELECTRON TRANSFER FLAVOPROTEIN BETA SUBUNIT LYSINE METHYLTRANSFERASE"/>
    <property type="match status" value="1"/>
</dbReference>
<dbReference type="Pfam" id="PF06325">
    <property type="entry name" value="PrmA"/>
    <property type="match status" value="1"/>
</dbReference>
<dbReference type="PIRSF" id="PIRSF000401">
    <property type="entry name" value="RPL11_MTase"/>
    <property type="match status" value="1"/>
</dbReference>
<dbReference type="SUPFAM" id="SSF53335">
    <property type="entry name" value="S-adenosyl-L-methionine-dependent methyltransferases"/>
    <property type="match status" value="1"/>
</dbReference>
<comment type="function">
    <text evidence="1">Methylates ribosomal protein L11.</text>
</comment>
<comment type="catalytic activity">
    <reaction evidence="1">
        <text>L-lysyl-[protein] + 3 S-adenosyl-L-methionine = N(6),N(6),N(6)-trimethyl-L-lysyl-[protein] + 3 S-adenosyl-L-homocysteine + 3 H(+)</text>
        <dbReference type="Rhea" id="RHEA:54192"/>
        <dbReference type="Rhea" id="RHEA-COMP:9752"/>
        <dbReference type="Rhea" id="RHEA-COMP:13826"/>
        <dbReference type="ChEBI" id="CHEBI:15378"/>
        <dbReference type="ChEBI" id="CHEBI:29969"/>
        <dbReference type="ChEBI" id="CHEBI:57856"/>
        <dbReference type="ChEBI" id="CHEBI:59789"/>
        <dbReference type="ChEBI" id="CHEBI:61961"/>
    </reaction>
</comment>
<comment type="subcellular location">
    <subcellularLocation>
        <location evidence="1">Cytoplasm</location>
    </subcellularLocation>
</comment>
<comment type="similarity">
    <text evidence="1">Belongs to the methyltransferase superfamily. PrmA family.</text>
</comment>
<organism>
    <name type="scientific">Escherichia fergusonii (strain ATCC 35469 / DSM 13698 / CCUG 18766 / IAM 14443 / JCM 21226 / LMG 7866 / NBRC 102419 / NCTC 12128 / CDC 0568-73)</name>
    <dbReference type="NCBI Taxonomy" id="585054"/>
    <lineage>
        <taxon>Bacteria</taxon>
        <taxon>Pseudomonadati</taxon>
        <taxon>Pseudomonadota</taxon>
        <taxon>Gammaproteobacteria</taxon>
        <taxon>Enterobacterales</taxon>
        <taxon>Enterobacteriaceae</taxon>
        <taxon>Escherichia</taxon>
    </lineage>
</organism>
<protein>
    <recommendedName>
        <fullName evidence="1">Ribosomal protein L11 methyltransferase</fullName>
        <shortName evidence="1">L11 Mtase</shortName>
        <ecNumber evidence="1">2.1.1.-</ecNumber>
    </recommendedName>
</protein>
<feature type="chain" id="PRO_1000132797" description="Ribosomal protein L11 methyltransferase">
    <location>
        <begin position="1"/>
        <end position="293"/>
    </location>
</feature>
<feature type="binding site" evidence="1">
    <location>
        <position position="145"/>
    </location>
    <ligand>
        <name>S-adenosyl-L-methionine</name>
        <dbReference type="ChEBI" id="CHEBI:59789"/>
    </ligand>
</feature>
<feature type="binding site" evidence="1">
    <location>
        <position position="166"/>
    </location>
    <ligand>
        <name>S-adenosyl-L-methionine</name>
        <dbReference type="ChEBI" id="CHEBI:59789"/>
    </ligand>
</feature>
<feature type="binding site" evidence="1">
    <location>
        <position position="188"/>
    </location>
    <ligand>
        <name>S-adenosyl-L-methionine</name>
        <dbReference type="ChEBI" id="CHEBI:59789"/>
    </ligand>
</feature>
<feature type="binding site" evidence="1">
    <location>
        <position position="230"/>
    </location>
    <ligand>
        <name>S-adenosyl-L-methionine</name>
        <dbReference type="ChEBI" id="CHEBI:59789"/>
    </ligand>
</feature>
<sequence length="293" mass="31905">MPWIQLKLNTTGANAEDLSDALMEAGAVSITFQDTHDTPVFEPLPGETRLWGDTDVIGLFDAETDMKEVVAILENHPLLGAGFAHKIEQLEDKDWEREWMDNFHPMRFGERLWICPSWRDVPDENAVNVMLDPGLAFGTGTHPTTSLCLQWLDSLDLTGKTVIDFGCGSGILAIAALKLGAAKAIGIDIDPQAIQASRDNAERNGVSDRLELYLPKDQPEEMKADVVVANILAGPLRELAPLISVLPVSGGLLGLSGILASQAESVCEAYADSFALDPVVEKEEWCRITGRKN</sequence>
<name>PRMA_ESCF3</name>
<gene>
    <name evidence="1" type="primary">prmA</name>
    <name type="ordered locus">EFER_3238</name>
</gene>
<proteinExistence type="inferred from homology"/>
<reference key="1">
    <citation type="journal article" date="2009" name="PLoS Genet.">
        <title>Organised genome dynamics in the Escherichia coli species results in highly diverse adaptive paths.</title>
        <authorList>
            <person name="Touchon M."/>
            <person name="Hoede C."/>
            <person name="Tenaillon O."/>
            <person name="Barbe V."/>
            <person name="Baeriswyl S."/>
            <person name="Bidet P."/>
            <person name="Bingen E."/>
            <person name="Bonacorsi S."/>
            <person name="Bouchier C."/>
            <person name="Bouvet O."/>
            <person name="Calteau A."/>
            <person name="Chiapello H."/>
            <person name="Clermont O."/>
            <person name="Cruveiller S."/>
            <person name="Danchin A."/>
            <person name="Diard M."/>
            <person name="Dossat C."/>
            <person name="Karoui M.E."/>
            <person name="Frapy E."/>
            <person name="Garry L."/>
            <person name="Ghigo J.M."/>
            <person name="Gilles A.M."/>
            <person name="Johnson J."/>
            <person name="Le Bouguenec C."/>
            <person name="Lescat M."/>
            <person name="Mangenot S."/>
            <person name="Martinez-Jehanne V."/>
            <person name="Matic I."/>
            <person name="Nassif X."/>
            <person name="Oztas S."/>
            <person name="Petit M.A."/>
            <person name="Pichon C."/>
            <person name="Rouy Z."/>
            <person name="Ruf C.S."/>
            <person name="Schneider D."/>
            <person name="Tourret J."/>
            <person name="Vacherie B."/>
            <person name="Vallenet D."/>
            <person name="Medigue C."/>
            <person name="Rocha E.P.C."/>
            <person name="Denamur E."/>
        </authorList>
    </citation>
    <scope>NUCLEOTIDE SEQUENCE [LARGE SCALE GENOMIC DNA]</scope>
    <source>
        <strain>ATCC 35469 / DSM 13698 / BCRC 15582 / CCUG 18766 / IAM 14443 / JCM 21226 / LMG 7866 / NBRC 102419 / NCTC 12128 / CDC 0568-73</strain>
    </source>
</reference>
<evidence type="ECO:0000255" key="1">
    <source>
        <dbReference type="HAMAP-Rule" id="MF_00735"/>
    </source>
</evidence>